<keyword id="KW-0012">Acyltransferase</keyword>
<keyword id="KW-0067">ATP-binding</keyword>
<keyword id="KW-0963">Cytoplasm</keyword>
<keyword id="KW-0408">Iron</keyword>
<keyword id="KW-0418">Kinase</keyword>
<keyword id="KW-0479">Metal-binding</keyword>
<keyword id="KW-0511">Multifunctional enzyme</keyword>
<keyword id="KW-0547">Nucleotide-binding</keyword>
<keyword id="KW-1185">Reference proteome</keyword>
<keyword id="KW-0723">Serine/threonine-protein kinase</keyword>
<keyword id="KW-0808">Transferase</keyword>
<keyword id="KW-0819">tRNA processing</keyword>
<comment type="function">
    <text evidence="1">Required for the formation of a threonylcarbamoyl group on adenosine at position 37 (t(6)A37) in tRNAs that read codons beginning with adenine. Is a component of the KEOPS complex that is probably involved in the transfer of the threonylcarbamoyl moiety of threonylcarbamoyl-AMP (TC-AMP) to the N6 group of A37. The Kae1 domain likely plays a direct catalytic role in this reaction. The Bud32 domain probably displays kinase activity that regulates Kae1 function.</text>
</comment>
<comment type="catalytic activity">
    <reaction evidence="1">
        <text>L-seryl-[protein] + ATP = O-phospho-L-seryl-[protein] + ADP + H(+)</text>
        <dbReference type="Rhea" id="RHEA:17989"/>
        <dbReference type="Rhea" id="RHEA-COMP:9863"/>
        <dbReference type="Rhea" id="RHEA-COMP:11604"/>
        <dbReference type="ChEBI" id="CHEBI:15378"/>
        <dbReference type="ChEBI" id="CHEBI:29999"/>
        <dbReference type="ChEBI" id="CHEBI:30616"/>
        <dbReference type="ChEBI" id="CHEBI:83421"/>
        <dbReference type="ChEBI" id="CHEBI:456216"/>
        <dbReference type="EC" id="2.7.11.1"/>
    </reaction>
</comment>
<comment type="catalytic activity">
    <reaction evidence="1">
        <text>L-threonyl-[protein] + ATP = O-phospho-L-threonyl-[protein] + ADP + H(+)</text>
        <dbReference type="Rhea" id="RHEA:46608"/>
        <dbReference type="Rhea" id="RHEA-COMP:11060"/>
        <dbReference type="Rhea" id="RHEA-COMP:11605"/>
        <dbReference type="ChEBI" id="CHEBI:15378"/>
        <dbReference type="ChEBI" id="CHEBI:30013"/>
        <dbReference type="ChEBI" id="CHEBI:30616"/>
        <dbReference type="ChEBI" id="CHEBI:61977"/>
        <dbReference type="ChEBI" id="CHEBI:456216"/>
        <dbReference type="EC" id="2.7.11.1"/>
    </reaction>
</comment>
<comment type="catalytic activity">
    <reaction evidence="1">
        <text>L-threonylcarbamoyladenylate + adenosine(37) in tRNA = N(6)-L-threonylcarbamoyladenosine(37) in tRNA + AMP + H(+)</text>
        <dbReference type="Rhea" id="RHEA:37059"/>
        <dbReference type="Rhea" id="RHEA-COMP:10162"/>
        <dbReference type="Rhea" id="RHEA-COMP:10163"/>
        <dbReference type="ChEBI" id="CHEBI:15378"/>
        <dbReference type="ChEBI" id="CHEBI:73682"/>
        <dbReference type="ChEBI" id="CHEBI:74411"/>
        <dbReference type="ChEBI" id="CHEBI:74418"/>
        <dbReference type="ChEBI" id="CHEBI:456215"/>
        <dbReference type="EC" id="2.3.1.234"/>
    </reaction>
</comment>
<comment type="cofactor">
    <cofactor evidence="1">
        <name>Fe(2+)</name>
        <dbReference type="ChEBI" id="CHEBI:29033"/>
    </cofactor>
    <text evidence="1">Binds 1 Fe(2+) ion per subunit.</text>
</comment>
<comment type="subunit">
    <text evidence="1">Component of the KEOPS complex that consists of Kae1, Bud32, Cgi121 and Pcc1; the whole complex dimerizes.</text>
</comment>
<comment type="subcellular location">
    <subcellularLocation>
        <location evidence="1">Cytoplasm</location>
    </subcellularLocation>
</comment>
<comment type="similarity">
    <text evidence="1">In the N-terminal section; belongs to the KAE1 / TsaD family.</text>
</comment>
<comment type="similarity">
    <text evidence="1">In the C-terminal section; belongs to the protein kinase superfamily. Tyr protein kinase family. BUD32 subfamily.</text>
</comment>
<sequence>MTRVLGIEGTAWCASAAVFDAETDAVFIDSDAYVPESGGIHPREAAEHMREAVPSVVEAALDHVESNWGDPADAIDAVAFSRGPGLGPCLRIAGTAARSLAGTLSCPLVGVNHMVAHLEIGRHRSGFESPVCLNASGANAHVLGYHNGRYRVLGETMDTGVGNAIDKFTRHVGWSHPGGPKVESHAEDGDYVELPYVVKGMDFSFSGIMSAAKQAYDDGTPVADVCCGLQETIFAMLAEVSERALSLTGADELVVGGGVAQNSRLQEMLTQMCENRGAAIYVPEPRFLRDNAGMIAVLGAKMYEAGDIISIPESGVRPDFRPDEVPVSWRDDEAVARPVPTDERRQGAEAVVDIDADGGRVTKRRLEKAYRHPVLDSRLRSQRTRSEARLTSEARRQGVPTPVVYDVDPDAGRLVFQYVGDADLKTALSESAVRDVGRHLAACHAAGFVHGDPTPRNVRVGEDRAFLIDFGLGYYTDAVEDYAMDLHVFEGALGGTADDPTAQITAFEDAYRSAGDGAVVDHLREIETRGRYQ</sequence>
<organism>
    <name type="scientific">Natronomonas pharaonis (strain ATCC 35678 / DSM 2160 / CIP 103997 / JCM 8858 / NBRC 14720 / NCIMB 2260 / Gabara)</name>
    <name type="common">Halobacterium pharaonis</name>
    <dbReference type="NCBI Taxonomy" id="348780"/>
    <lineage>
        <taxon>Archaea</taxon>
        <taxon>Methanobacteriati</taxon>
        <taxon>Methanobacteriota</taxon>
        <taxon>Stenosarchaea group</taxon>
        <taxon>Halobacteria</taxon>
        <taxon>Halobacteriales</taxon>
        <taxon>Haloarculaceae</taxon>
        <taxon>Natronomonas</taxon>
    </lineage>
</organism>
<dbReference type="EC" id="2.3.1.234" evidence="1"/>
<dbReference type="EC" id="2.7.11.1" evidence="1"/>
<dbReference type="EMBL" id="CR936257">
    <property type="protein sequence ID" value="CAI50626.1"/>
    <property type="molecule type" value="Genomic_DNA"/>
</dbReference>
<dbReference type="RefSeq" id="WP_011324236.1">
    <property type="nucleotide sequence ID" value="NC_007426.1"/>
</dbReference>
<dbReference type="SMR" id="Q3IMN2"/>
<dbReference type="STRING" id="348780.NP_5070A"/>
<dbReference type="EnsemblBacteria" id="CAI50626">
    <property type="protein sequence ID" value="CAI50626"/>
    <property type="gene ID" value="NP_5070A"/>
</dbReference>
<dbReference type="GeneID" id="3702246"/>
<dbReference type="KEGG" id="nph:NP_5070A"/>
<dbReference type="eggNOG" id="arCOG01185">
    <property type="taxonomic scope" value="Archaea"/>
</dbReference>
<dbReference type="HOGENOM" id="CLU_023208_2_2_2"/>
<dbReference type="OrthoDB" id="6818at2157"/>
<dbReference type="Proteomes" id="UP000002698">
    <property type="component" value="Chromosome"/>
</dbReference>
<dbReference type="GO" id="GO:0005737">
    <property type="term" value="C:cytoplasm"/>
    <property type="evidence" value="ECO:0007669"/>
    <property type="project" value="UniProtKB-SubCell"/>
</dbReference>
<dbReference type="GO" id="GO:0000408">
    <property type="term" value="C:EKC/KEOPS complex"/>
    <property type="evidence" value="ECO:0007669"/>
    <property type="project" value="InterPro"/>
</dbReference>
<dbReference type="GO" id="GO:0005524">
    <property type="term" value="F:ATP binding"/>
    <property type="evidence" value="ECO:0007669"/>
    <property type="project" value="UniProtKB-UniRule"/>
</dbReference>
<dbReference type="GO" id="GO:0005506">
    <property type="term" value="F:iron ion binding"/>
    <property type="evidence" value="ECO:0007669"/>
    <property type="project" value="UniProtKB-UniRule"/>
</dbReference>
<dbReference type="GO" id="GO:0004222">
    <property type="term" value="F:metalloendopeptidase activity"/>
    <property type="evidence" value="ECO:0007669"/>
    <property type="project" value="InterPro"/>
</dbReference>
<dbReference type="GO" id="GO:0061711">
    <property type="term" value="F:N(6)-L-threonylcarbamoyladenine synthase activity"/>
    <property type="evidence" value="ECO:0007669"/>
    <property type="project" value="UniProtKB-EC"/>
</dbReference>
<dbReference type="GO" id="GO:0106310">
    <property type="term" value="F:protein serine kinase activity"/>
    <property type="evidence" value="ECO:0007669"/>
    <property type="project" value="RHEA"/>
</dbReference>
<dbReference type="GO" id="GO:0004674">
    <property type="term" value="F:protein serine/threonine kinase activity"/>
    <property type="evidence" value="ECO:0007669"/>
    <property type="project" value="UniProtKB-KW"/>
</dbReference>
<dbReference type="GO" id="GO:0004712">
    <property type="term" value="F:protein serine/threonine/tyrosine kinase activity"/>
    <property type="evidence" value="ECO:0007669"/>
    <property type="project" value="UniProtKB-UniRule"/>
</dbReference>
<dbReference type="GO" id="GO:0008270">
    <property type="term" value="F:zinc ion binding"/>
    <property type="evidence" value="ECO:0007669"/>
    <property type="project" value="InterPro"/>
</dbReference>
<dbReference type="GO" id="GO:0002949">
    <property type="term" value="P:tRNA threonylcarbamoyladenosine modification"/>
    <property type="evidence" value="ECO:0007669"/>
    <property type="project" value="UniProtKB-UniRule"/>
</dbReference>
<dbReference type="Gene3D" id="3.30.420.40">
    <property type="match status" value="2"/>
</dbReference>
<dbReference type="Gene3D" id="3.30.200.20">
    <property type="entry name" value="Phosphorylase Kinase, domain 1"/>
    <property type="match status" value="1"/>
</dbReference>
<dbReference type="Gene3D" id="1.10.510.10">
    <property type="entry name" value="Transferase(Phosphotransferase) domain 1"/>
    <property type="match status" value="1"/>
</dbReference>
<dbReference type="HAMAP" id="MF_01446">
    <property type="entry name" value="Kae1"/>
    <property type="match status" value="1"/>
</dbReference>
<dbReference type="HAMAP" id="MF_01447">
    <property type="entry name" value="Kae1_Bud32_arch"/>
    <property type="match status" value="1"/>
</dbReference>
<dbReference type="InterPro" id="IPR002575">
    <property type="entry name" value="Aminoglycoside_PTrfase"/>
</dbReference>
<dbReference type="InterPro" id="IPR043129">
    <property type="entry name" value="ATPase_NBD"/>
</dbReference>
<dbReference type="InterPro" id="IPR022495">
    <property type="entry name" value="Bud32"/>
</dbReference>
<dbReference type="InterPro" id="IPR000905">
    <property type="entry name" value="Gcp-like_dom"/>
</dbReference>
<dbReference type="InterPro" id="IPR017861">
    <property type="entry name" value="KAE1/TsaD"/>
</dbReference>
<dbReference type="InterPro" id="IPR034680">
    <property type="entry name" value="Kae1_archaea_euk"/>
</dbReference>
<dbReference type="InterPro" id="IPR011009">
    <property type="entry name" value="Kinase-like_dom_sf"/>
</dbReference>
<dbReference type="InterPro" id="IPR009220">
    <property type="entry name" value="tRNA_threonyl_synthase/kinase"/>
</dbReference>
<dbReference type="NCBIfam" id="TIGR03724">
    <property type="entry name" value="arch_bud32"/>
    <property type="match status" value="1"/>
</dbReference>
<dbReference type="NCBIfam" id="TIGR03722">
    <property type="entry name" value="arch_KAE1"/>
    <property type="match status" value="1"/>
</dbReference>
<dbReference type="NCBIfam" id="TIGR00329">
    <property type="entry name" value="gcp_kae1"/>
    <property type="match status" value="1"/>
</dbReference>
<dbReference type="NCBIfam" id="NF007174">
    <property type="entry name" value="PRK09605.1"/>
    <property type="match status" value="1"/>
</dbReference>
<dbReference type="PANTHER" id="PTHR11735">
    <property type="entry name" value="TRNA N6-ADENOSINE THREONYLCARBAMOYLTRANSFERASE"/>
    <property type="match status" value="1"/>
</dbReference>
<dbReference type="PANTHER" id="PTHR11735:SF14">
    <property type="entry name" value="TRNA N6-ADENOSINE THREONYLCARBAMOYLTRANSFERASE"/>
    <property type="match status" value="1"/>
</dbReference>
<dbReference type="Pfam" id="PF01636">
    <property type="entry name" value="APH"/>
    <property type="match status" value="1"/>
</dbReference>
<dbReference type="Pfam" id="PF00814">
    <property type="entry name" value="TsaD"/>
    <property type="match status" value="1"/>
</dbReference>
<dbReference type="PIRSF" id="PIRSF036401">
    <property type="entry name" value="Gcp_STYKS"/>
    <property type="match status" value="1"/>
</dbReference>
<dbReference type="PRINTS" id="PR00789">
    <property type="entry name" value="OSIALOPTASE"/>
</dbReference>
<dbReference type="SUPFAM" id="SSF53067">
    <property type="entry name" value="Actin-like ATPase domain"/>
    <property type="match status" value="1"/>
</dbReference>
<dbReference type="SUPFAM" id="SSF56112">
    <property type="entry name" value="Protein kinase-like (PK-like)"/>
    <property type="match status" value="1"/>
</dbReference>
<gene>
    <name type="ordered locus">NP_5070A</name>
</gene>
<protein>
    <recommendedName>
        <fullName evidence="1">Probable bifunctional tRNA threonylcarbamoyladenosine biosynthesis protein</fullName>
    </recommendedName>
    <domain>
        <recommendedName>
            <fullName evidence="1">tRNA N6-adenosine threonylcarbamoyltransferase</fullName>
            <ecNumber evidence="1">2.3.1.234</ecNumber>
        </recommendedName>
        <alternativeName>
            <fullName>N6-L-threonylcarbamoyladenine synthase</fullName>
            <shortName>t(6)A synthase</shortName>
        </alternativeName>
        <alternativeName>
            <fullName evidence="1">t(6)A37 threonylcarbamoyladenosine biosynthesis protein Kae1</fullName>
        </alternativeName>
        <alternativeName>
            <fullName evidence="1">tRNA threonylcarbamoyladenosine biosynthesis protein Kae1</fullName>
        </alternativeName>
    </domain>
    <domain>
        <recommendedName>
            <fullName evidence="1">Serine/threonine-protein kinase Bud32</fullName>
            <ecNumber evidence="1">2.7.11.1</ecNumber>
        </recommendedName>
    </domain>
</protein>
<feature type="chain" id="PRO_0000303659" description="Probable bifunctional tRNA threonylcarbamoyladenosine biosynthesis protein">
    <location>
        <begin position="1"/>
        <end position="533"/>
    </location>
</feature>
<feature type="domain" description="Protein kinase" evidence="1">
    <location>
        <begin position="338"/>
        <end position="533"/>
    </location>
</feature>
<feature type="region of interest" description="Kae1">
    <location>
        <begin position="1"/>
        <end position="329"/>
    </location>
</feature>
<feature type="active site" description="Proton acceptor; for kinase activity" evidence="1">
    <location>
        <position position="452"/>
    </location>
</feature>
<feature type="binding site" evidence="1">
    <location>
        <position position="113"/>
    </location>
    <ligand>
        <name>Fe cation</name>
        <dbReference type="ChEBI" id="CHEBI:24875"/>
    </ligand>
</feature>
<feature type="binding site" evidence="1">
    <location>
        <position position="117"/>
    </location>
    <ligand>
        <name>Fe cation</name>
        <dbReference type="ChEBI" id="CHEBI:24875"/>
    </ligand>
</feature>
<feature type="binding site" evidence="1">
    <location>
        <begin position="134"/>
        <end position="138"/>
    </location>
    <ligand>
        <name>L-threonylcarbamoyladenylate</name>
        <dbReference type="ChEBI" id="CHEBI:73682"/>
    </ligand>
</feature>
<feature type="binding site" evidence="1">
    <location>
        <position position="166"/>
    </location>
    <ligand>
        <name>L-threonylcarbamoyladenylate</name>
        <dbReference type="ChEBI" id="CHEBI:73682"/>
    </ligand>
</feature>
<feature type="binding site" evidence="1">
    <location>
        <position position="179"/>
    </location>
    <ligand>
        <name>L-threonylcarbamoyladenylate</name>
        <dbReference type="ChEBI" id="CHEBI:73682"/>
    </ligand>
</feature>
<feature type="binding site" evidence="1">
    <location>
        <position position="183"/>
    </location>
    <ligand>
        <name>L-threonylcarbamoyladenylate</name>
        <dbReference type="ChEBI" id="CHEBI:73682"/>
    </ligand>
</feature>
<feature type="binding site" evidence="1">
    <location>
        <position position="262"/>
    </location>
    <ligand>
        <name>L-threonylcarbamoyladenylate</name>
        <dbReference type="ChEBI" id="CHEBI:73682"/>
    </ligand>
</feature>
<feature type="binding site" evidence="1">
    <location>
        <position position="290"/>
    </location>
    <ligand>
        <name>Fe cation</name>
        <dbReference type="ChEBI" id="CHEBI:24875"/>
    </ligand>
</feature>
<feature type="binding site" evidence="1">
    <location>
        <begin position="345"/>
        <end position="352"/>
    </location>
    <ligand>
        <name>ATP</name>
        <dbReference type="ChEBI" id="CHEBI:30616"/>
    </ligand>
</feature>
<feature type="binding site" evidence="1">
    <location>
        <position position="363"/>
    </location>
    <ligand>
        <name>ATP</name>
        <dbReference type="ChEBI" id="CHEBI:30616"/>
    </ligand>
</feature>
<evidence type="ECO:0000255" key="1">
    <source>
        <dbReference type="HAMAP-Rule" id="MF_01447"/>
    </source>
</evidence>
<reference key="1">
    <citation type="journal article" date="2005" name="Genome Res.">
        <title>Living with two extremes: conclusions from the genome sequence of Natronomonas pharaonis.</title>
        <authorList>
            <person name="Falb M."/>
            <person name="Pfeiffer F."/>
            <person name="Palm P."/>
            <person name="Rodewald K."/>
            <person name="Hickmann V."/>
            <person name="Tittor J."/>
            <person name="Oesterhelt D."/>
        </authorList>
    </citation>
    <scope>NUCLEOTIDE SEQUENCE [LARGE SCALE GENOMIC DNA]</scope>
    <source>
        <strain>ATCC 35678 / DSM 2160 / CIP 103997 / JCM 8858 / NBRC 14720 / NCIMB 2260 / Gabara</strain>
    </source>
</reference>
<proteinExistence type="inferred from homology"/>
<name>KAE1B_NATPD</name>
<accession>Q3IMN2</accession>